<keyword id="KW-0903">Direct protein sequencing</keyword>
<keyword id="KW-0256">Endoplasmic reticulum</keyword>
<keyword id="KW-0472">Membrane</keyword>
<keyword id="KW-1185">Reference proteome</keyword>
<keyword id="KW-0732">Signal</keyword>
<keyword id="KW-0812">Transmembrane</keyword>
<keyword id="KW-1133">Transmembrane helix</keyword>
<dbReference type="EMBL" id="AJ293581">
    <property type="protein sequence ID" value="CAC10570.1"/>
    <property type="molecule type" value="mRNA"/>
</dbReference>
<dbReference type="EMBL" id="F14593">
    <property type="protein sequence ID" value="CAA23144.1"/>
    <property type="molecule type" value="mRNA"/>
</dbReference>
<dbReference type="RefSeq" id="NP_999353.1">
    <property type="nucleotide sequence ID" value="NM_214188.1"/>
</dbReference>
<dbReference type="SMR" id="Q29381"/>
<dbReference type="FunCoup" id="Q29381">
    <property type="interactions" value="2399"/>
</dbReference>
<dbReference type="STRING" id="9823.ENSSSCP00000043061"/>
<dbReference type="PaxDb" id="9823-ENSSSCP00000003805"/>
<dbReference type="PeptideAtlas" id="Q29381"/>
<dbReference type="GeneID" id="397385"/>
<dbReference type="KEGG" id="ssc:397385"/>
<dbReference type="CTD" id="1650"/>
<dbReference type="eggNOG" id="KOG2754">
    <property type="taxonomic scope" value="Eukaryota"/>
</dbReference>
<dbReference type="InParanoid" id="Q29381"/>
<dbReference type="OrthoDB" id="29105at2759"/>
<dbReference type="UniPathway" id="UPA00378"/>
<dbReference type="Proteomes" id="UP000008227">
    <property type="component" value="Unplaced"/>
</dbReference>
<dbReference type="Proteomes" id="UP000314985">
    <property type="component" value="Unplaced"/>
</dbReference>
<dbReference type="Proteomes" id="UP000694570">
    <property type="component" value="Unplaced"/>
</dbReference>
<dbReference type="Proteomes" id="UP000694571">
    <property type="component" value="Unplaced"/>
</dbReference>
<dbReference type="Proteomes" id="UP000694720">
    <property type="component" value="Unplaced"/>
</dbReference>
<dbReference type="Proteomes" id="UP000694722">
    <property type="component" value="Unplaced"/>
</dbReference>
<dbReference type="Proteomes" id="UP000694723">
    <property type="component" value="Unplaced"/>
</dbReference>
<dbReference type="Proteomes" id="UP000694724">
    <property type="component" value="Unplaced"/>
</dbReference>
<dbReference type="Proteomes" id="UP000694725">
    <property type="component" value="Unplaced"/>
</dbReference>
<dbReference type="Proteomes" id="UP000694726">
    <property type="component" value="Unplaced"/>
</dbReference>
<dbReference type="Proteomes" id="UP000694727">
    <property type="component" value="Unplaced"/>
</dbReference>
<dbReference type="Proteomes" id="UP000694728">
    <property type="component" value="Unplaced"/>
</dbReference>
<dbReference type="GO" id="GO:0008250">
    <property type="term" value="C:oligosaccharyltransferase complex"/>
    <property type="evidence" value="ECO:0000250"/>
    <property type="project" value="UniProtKB"/>
</dbReference>
<dbReference type="GO" id="GO:0006486">
    <property type="term" value="P:protein glycosylation"/>
    <property type="evidence" value="ECO:0000250"/>
    <property type="project" value="UniProtKB"/>
</dbReference>
<dbReference type="GO" id="GO:0018279">
    <property type="term" value="P:protein N-linked glycosylation via asparagine"/>
    <property type="evidence" value="ECO:0000318"/>
    <property type="project" value="GO_Central"/>
</dbReference>
<dbReference type="InterPro" id="IPR005013">
    <property type="entry name" value="DDOST_48_kDa_subunit"/>
</dbReference>
<dbReference type="InterPro" id="IPR055459">
    <property type="entry name" value="OST48_MD"/>
</dbReference>
<dbReference type="InterPro" id="IPR055457">
    <property type="entry name" value="OST48_N"/>
</dbReference>
<dbReference type="PANTHER" id="PTHR10830">
    <property type="entry name" value="DOLICHYL-DIPHOSPHOOLIGOSACCHARIDE--PROTEIN GLYCOSYLTRANSFERASE 48 KDA SUBUNIT"/>
    <property type="match status" value="1"/>
</dbReference>
<dbReference type="PANTHER" id="PTHR10830:SF0">
    <property type="entry name" value="DOLICHYL-DIPHOSPHOOLIGOSACCHARIDE--PROTEIN GLYCOSYLTRANSFERASE 48 KDA SUBUNIT"/>
    <property type="match status" value="1"/>
</dbReference>
<dbReference type="Pfam" id="PF23358">
    <property type="entry name" value="OST48_MD"/>
    <property type="match status" value="1"/>
</dbReference>
<dbReference type="Pfam" id="PF03345">
    <property type="entry name" value="OST48_N"/>
    <property type="match status" value="1"/>
</dbReference>
<proteinExistence type="evidence at protein level"/>
<name>OST48_PIG</name>
<accession>Q29381</accession>
<accession>Q9GL02</accession>
<comment type="function">
    <text evidence="1 2 4">Subunit of the oligosaccharyl transferase (OST) complex that catalyzes the initial transfer of a defined glycan (Glc(3)Man(9)GlcNAc(2) in eukaryotes) from the lipid carrier dolichol-pyrophosphate to an asparagine residue within an Asn-X-Ser/Thr consensus motif in nascent polypeptide chains, the first step in protein N-glycosylation (PubMed:11443278). N-glycosylation occurs cotranslationally and the complex associates with the Sec61 complex at the channel-forming translocon complex that mediates protein translocation across the endoplasmic reticulum (ER). All subunits are required for a maximal enzyme activity (By similarity). Required for the assembly of both SST3A- and SS3B-containing OST complexes (By similarity).</text>
</comment>
<comment type="pathway">
    <text evidence="4">Protein modification; protein glycosylation.</text>
</comment>
<comment type="subunit">
    <text evidence="1 2">Component of the oligosaccharyltransferase (OST) complex (By similarity). OST exists in two different complex forms which contain common core subunits RPN1, RPN2, OST48, OST4, DAD1 and TMEM258, either STT3A or STT3B as catalytic subunits, and form-specific accessory subunits (By similarity). STT3A complex assembly occurs through the formation of 3 subcomplexes. Subcomplex 1 contains RPN1 and TMEM258, subcomplex 2 contains the STT3A-specific subunits STT3A, DC2/OSTC, and KCP2 as well as the core subunit OST4, and subcomplex 3 contains RPN2, DAD1, and OST48. The STT3A complex can form stable complexes with the Sec61 complex or with both the Sec61 and TRAP complexes. Interacts with SMIM22 (By similarity).</text>
</comment>
<comment type="subcellular location">
    <subcellularLocation>
        <location evidence="4">Endoplasmic reticulum membrane</location>
        <topology evidence="4">Single-pass type I membrane protein</topology>
    </subcellularLocation>
</comment>
<comment type="similarity">
    <text evidence="5">Belongs to the DDOST 48 kDa subunit family.</text>
</comment>
<reference key="1">
    <citation type="journal article" date="2000" name="Glycoconj. J.">
        <title>The oligosaccharyltransferase complex from pig liver: cDNA cloning, expression and functional characterisation.</title>
        <authorList>
            <person name="Hardt B."/>
            <person name="Aparicio R."/>
            <person name="Bause E."/>
        </authorList>
    </citation>
    <scope>NUCLEOTIDE SEQUENCE [MRNA]</scope>
    <scope>PROTEIN SEQUENCE OF 26-43</scope>
    <scope>MUTAGENESIS OF LYS-437</scope>
    <scope>FUNCTION</scope>
    <scope>SUBCELLULAR LOCATION</scope>
    <source>
        <tissue>Liver</tissue>
    </source>
</reference>
<reference key="2">
    <citation type="journal article" date="1996" name="Mamm. Genome">
        <title>Evaluation and characterization of a porcine small intestine cDNA library: analysis of 839 clones.</title>
        <authorList>
            <person name="Winteroe A.K."/>
            <person name="Fredholm M."/>
            <person name="Davies W."/>
        </authorList>
    </citation>
    <scope>NUCLEOTIDE SEQUENCE [LARGE SCALE MRNA] OF 27-129</scope>
    <source>
        <tissue>Small intestine</tissue>
    </source>
</reference>
<organism>
    <name type="scientific">Sus scrofa</name>
    <name type="common">Pig</name>
    <dbReference type="NCBI Taxonomy" id="9823"/>
    <lineage>
        <taxon>Eukaryota</taxon>
        <taxon>Metazoa</taxon>
        <taxon>Chordata</taxon>
        <taxon>Craniata</taxon>
        <taxon>Vertebrata</taxon>
        <taxon>Euteleostomi</taxon>
        <taxon>Mammalia</taxon>
        <taxon>Eutheria</taxon>
        <taxon>Laurasiatheria</taxon>
        <taxon>Artiodactyla</taxon>
        <taxon>Suina</taxon>
        <taxon>Suidae</taxon>
        <taxon>Sus</taxon>
    </lineage>
</organism>
<gene>
    <name evidence="1" type="primary">DDOST</name>
    <name type="synonym">OST48</name>
</gene>
<evidence type="ECO:0000250" key="1">
    <source>
        <dbReference type="UniProtKB" id="P39656"/>
    </source>
</evidence>
<evidence type="ECO:0000250" key="2">
    <source>
        <dbReference type="UniProtKB" id="Q05052"/>
    </source>
</evidence>
<evidence type="ECO:0000255" key="3"/>
<evidence type="ECO:0000269" key="4">
    <source>
    </source>
</evidence>
<evidence type="ECO:0000305" key="5"/>
<protein>
    <recommendedName>
        <fullName evidence="1">Dolichyl-diphosphooligosaccharide--protein glycosyltransferase 48 kDa subunit</fullName>
        <shortName>DDOST 48 kDa subunit</shortName>
        <shortName>Oligosaccharyl transferase 48 kDa subunit</shortName>
    </recommendedName>
</protein>
<feature type="signal peptide" evidence="4">
    <location>
        <begin position="1"/>
        <end position="25"/>
    </location>
</feature>
<feature type="chain" id="PRO_0000058095" description="Dolichyl-diphosphooligosaccharide--protein glycosyltransferase 48 kDa subunit">
    <location>
        <begin position="26"/>
        <end position="439"/>
    </location>
</feature>
<feature type="topological domain" description="Lumenal" evidence="3">
    <location>
        <begin position="27"/>
        <end position="410"/>
    </location>
</feature>
<feature type="transmembrane region" description="Helical" evidence="3">
    <location>
        <begin position="411"/>
        <end position="430"/>
    </location>
</feature>
<feature type="topological domain" description="Cytoplasmic" evidence="3">
    <location>
        <begin position="431"/>
        <end position="439"/>
    </location>
</feature>
<feature type="mutagenesis site" description="Abolishes ER localization resulting in plasma membrane localization." evidence="4">
    <original>K</original>
    <variation>L</variation>
    <location>
        <position position="437"/>
    </location>
</feature>
<sequence length="439" mass="48863">MELGAAARAWSLLWLLLPLLGLVGASGPRTLVLLDNLNLRETHSLFFRSLKDRGFVLTFKTADDPSLSLIKYGEFLYDNLIVFSPSVEDFGGNINVETISTFIDGGGSVLVAASSDIGDPLRELGSECGIEFDEEKTAVIDHHNYDVSDLAQHTLIVADTENLLKAPTIVGKSSLNPILFRGVGMVADPDNPLVLDILTGSSTSYSFFPDKPITQYPHAVGKNTLLIAGLQARNNARVIFSGSLDFFSDAFFNSAVQKATPGSQRYPQTGNYELAVALSRWVFKEEGVLRVGPVSHHRVGEKAPPNAYTVTDLVEYSIVIEQLSEGRWVPFDGDDIQLEFVRIDPFVRTFLKRKGGKYSVQFKFPDVYGVFQFKVDYNRLGYTHLYSSTQVSVRPLQHTQYERFIPSAYPYYASAFSMMVGLFIFSVVFLHMKEKEKSD</sequence>